<gene>
    <name evidence="1" type="primary">gpmA</name>
    <name type="synonym">gpm</name>
    <name type="synonym">pgm</name>
    <name type="ordered locus">ML2441</name>
    <name type="ORF">B2168_C3_246</name>
</gene>
<name>GPMA_MYCLE</name>
<dbReference type="EC" id="5.4.2.11" evidence="1"/>
<dbReference type="EMBL" id="U00018">
    <property type="protein sequence ID" value="AAA17240.1"/>
    <property type="molecule type" value="Genomic_DNA"/>
</dbReference>
<dbReference type="EMBL" id="AL583925">
    <property type="protein sequence ID" value="CAC31958.1"/>
    <property type="molecule type" value="Genomic_DNA"/>
</dbReference>
<dbReference type="PIR" id="S72904">
    <property type="entry name" value="S72904"/>
</dbReference>
<dbReference type="RefSeq" id="NP_302582.1">
    <property type="nucleotide sequence ID" value="NC_002677.1"/>
</dbReference>
<dbReference type="RefSeq" id="WP_010908901.1">
    <property type="nucleotide sequence ID" value="NC_002677.1"/>
</dbReference>
<dbReference type="SMR" id="P53531"/>
<dbReference type="STRING" id="272631.gene:17576304"/>
<dbReference type="KEGG" id="mle:ML2441"/>
<dbReference type="PATRIC" id="fig|272631.5.peg.4688"/>
<dbReference type="Leproma" id="ML2441"/>
<dbReference type="eggNOG" id="COG0588">
    <property type="taxonomic scope" value="Bacteria"/>
</dbReference>
<dbReference type="HOGENOM" id="CLU_033323_1_1_11"/>
<dbReference type="OrthoDB" id="9781415at2"/>
<dbReference type="UniPathway" id="UPA00109">
    <property type="reaction ID" value="UER00186"/>
</dbReference>
<dbReference type="Proteomes" id="UP000000806">
    <property type="component" value="Chromosome"/>
</dbReference>
<dbReference type="GO" id="GO:0004619">
    <property type="term" value="F:phosphoglycerate mutase activity"/>
    <property type="evidence" value="ECO:0007669"/>
    <property type="project" value="UniProtKB-EC"/>
</dbReference>
<dbReference type="GO" id="GO:0006094">
    <property type="term" value="P:gluconeogenesis"/>
    <property type="evidence" value="ECO:0007669"/>
    <property type="project" value="UniProtKB-UniRule"/>
</dbReference>
<dbReference type="GO" id="GO:0006096">
    <property type="term" value="P:glycolytic process"/>
    <property type="evidence" value="ECO:0007669"/>
    <property type="project" value="UniProtKB-UniRule"/>
</dbReference>
<dbReference type="CDD" id="cd07067">
    <property type="entry name" value="HP_PGM_like"/>
    <property type="match status" value="1"/>
</dbReference>
<dbReference type="FunFam" id="3.40.50.1240:FF:000003">
    <property type="entry name" value="2,3-bisphosphoglycerate-dependent phosphoglycerate mutase"/>
    <property type="match status" value="1"/>
</dbReference>
<dbReference type="Gene3D" id="3.40.50.1240">
    <property type="entry name" value="Phosphoglycerate mutase-like"/>
    <property type="match status" value="1"/>
</dbReference>
<dbReference type="HAMAP" id="MF_01039">
    <property type="entry name" value="PGAM_GpmA"/>
    <property type="match status" value="1"/>
</dbReference>
<dbReference type="InterPro" id="IPR013078">
    <property type="entry name" value="His_Pase_superF_clade-1"/>
</dbReference>
<dbReference type="InterPro" id="IPR029033">
    <property type="entry name" value="His_PPase_superfam"/>
</dbReference>
<dbReference type="InterPro" id="IPR001345">
    <property type="entry name" value="PG/BPGM_mutase_AS"/>
</dbReference>
<dbReference type="InterPro" id="IPR005952">
    <property type="entry name" value="Phosphogly_mut1"/>
</dbReference>
<dbReference type="NCBIfam" id="TIGR01258">
    <property type="entry name" value="pgm_1"/>
    <property type="match status" value="1"/>
</dbReference>
<dbReference type="NCBIfam" id="NF010713">
    <property type="entry name" value="PRK14115.1"/>
    <property type="match status" value="1"/>
</dbReference>
<dbReference type="NCBIfam" id="NF010718">
    <property type="entry name" value="PRK14120.1"/>
    <property type="match status" value="1"/>
</dbReference>
<dbReference type="PANTHER" id="PTHR11931">
    <property type="entry name" value="PHOSPHOGLYCERATE MUTASE"/>
    <property type="match status" value="1"/>
</dbReference>
<dbReference type="Pfam" id="PF00300">
    <property type="entry name" value="His_Phos_1"/>
    <property type="match status" value="1"/>
</dbReference>
<dbReference type="PIRSF" id="PIRSF000709">
    <property type="entry name" value="6PFK_2-Ptase"/>
    <property type="match status" value="1"/>
</dbReference>
<dbReference type="SMART" id="SM00855">
    <property type="entry name" value="PGAM"/>
    <property type="match status" value="1"/>
</dbReference>
<dbReference type="SUPFAM" id="SSF53254">
    <property type="entry name" value="Phosphoglycerate mutase-like"/>
    <property type="match status" value="1"/>
</dbReference>
<dbReference type="PROSITE" id="PS00175">
    <property type="entry name" value="PG_MUTASE"/>
    <property type="match status" value="1"/>
</dbReference>
<sequence>MQQGNTATLILLRHGESDWNARNLFTGWVDVGLTDKGRAEAVRSGELLAEHNLLPDVLYTSLLRRAITTAHLALDTADWLWIPVRRSWRLNERHYGALQGLDKAVTKARYGEERFMAWRRSYDTPPPPIEKGSEFSQDADPRYTDIGGGPLTECLADVVTRFLPYFTDVIVPDLRTGRTVLIVAHGNSLRALVKHLDEMSDDEVVGLNVPTGIPLRYDLDADLRPVVPGGTYLDPEAAAAVISQARP</sequence>
<accession>P53531</accession>
<evidence type="ECO:0000255" key="1">
    <source>
        <dbReference type="HAMAP-Rule" id="MF_01039"/>
    </source>
</evidence>
<keyword id="KW-0312">Gluconeogenesis</keyword>
<keyword id="KW-0324">Glycolysis</keyword>
<keyword id="KW-0413">Isomerase</keyword>
<keyword id="KW-1185">Reference proteome</keyword>
<feature type="chain" id="PRO_0000179891" description="2,3-bisphosphoglycerate-dependent phosphoglycerate mutase">
    <location>
        <begin position="1"/>
        <end position="247"/>
    </location>
</feature>
<feature type="active site" description="Tele-phosphohistidine intermediate" evidence="1">
    <location>
        <position position="14"/>
    </location>
</feature>
<feature type="active site" description="Proton donor/acceptor" evidence="1">
    <location>
        <position position="92"/>
    </location>
</feature>
<feature type="binding site" evidence="1">
    <location>
        <begin position="13"/>
        <end position="20"/>
    </location>
    <ligand>
        <name>substrate</name>
    </ligand>
</feature>
<feature type="binding site" evidence="1">
    <location>
        <begin position="26"/>
        <end position="27"/>
    </location>
    <ligand>
        <name>substrate</name>
    </ligand>
</feature>
<feature type="binding site" evidence="1">
    <location>
        <position position="65"/>
    </location>
    <ligand>
        <name>substrate</name>
    </ligand>
</feature>
<feature type="binding site" evidence="1">
    <location>
        <begin position="92"/>
        <end position="95"/>
    </location>
    <ligand>
        <name>substrate</name>
    </ligand>
</feature>
<feature type="binding site" evidence="1">
    <location>
        <position position="103"/>
    </location>
    <ligand>
        <name>substrate</name>
    </ligand>
</feature>
<feature type="binding site" evidence="1">
    <location>
        <begin position="119"/>
        <end position="120"/>
    </location>
    <ligand>
        <name>substrate</name>
    </ligand>
</feature>
<feature type="binding site" evidence="1">
    <location>
        <begin position="186"/>
        <end position="187"/>
    </location>
    <ligand>
        <name>substrate</name>
    </ligand>
</feature>
<feature type="site" description="Transition state stabilizer" evidence="1">
    <location>
        <position position="185"/>
    </location>
</feature>
<comment type="function">
    <text evidence="1">Catalyzes the interconversion of 2-phosphoglycerate and 3-phosphoglycerate.</text>
</comment>
<comment type="catalytic activity">
    <reaction evidence="1">
        <text>(2R)-2-phosphoglycerate = (2R)-3-phosphoglycerate</text>
        <dbReference type="Rhea" id="RHEA:15901"/>
        <dbReference type="ChEBI" id="CHEBI:58272"/>
        <dbReference type="ChEBI" id="CHEBI:58289"/>
        <dbReference type="EC" id="5.4.2.11"/>
    </reaction>
</comment>
<comment type="pathway">
    <text evidence="1">Carbohydrate degradation; glycolysis; pyruvate from D-glyceraldehyde 3-phosphate: step 3/5.</text>
</comment>
<comment type="similarity">
    <text evidence="1">Belongs to the phosphoglycerate mutase family. BPG-dependent PGAM subfamily.</text>
</comment>
<protein>
    <recommendedName>
        <fullName evidence="1">2,3-bisphosphoglycerate-dependent phosphoglycerate mutase</fullName>
        <shortName evidence="1">BPG-dependent PGAM</shortName>
        <shortName evidence="1">PGAM</shortName>
        <shortName evidence="1">Phosphoglyceromutase</shortName>
        <shortName evidence="1">dPGM</shortName>
        <ecNumber evidence="1">5.4.2.11</ecNumber>
    </recommendedName>
</protein>
<organism>
    <name type="scientific">Mycobacterium leprae (strain TN)</name>
    <dbReference type="NCBI Taxonomy" id="272631"/>
    <lineage>
        <taxon>Bacteria</taxon>
        <taxon>Bacillati</taxon>
        <taxon>Actinomycetota</taxon>
        <taxon>Actinomycetes</taxon>
        <taxon>Mycobacteriales</taxon>
        <taxon>Mycobacteriaceae</taxon>
        <taxon>Mycobacterium</taxon>
    </lineage>
</organism>
<reference key="1">
    <citation type="submission" date="1994-03" db="EMBL/GenBank/DDBJ databases">
        <authorList>
            <person name="Smith D.R."/>
            <person name="Robison K."/>
        </authorList>
    </citation>
    <scope>NUCLEOTIDE SEQUENCE [GENOMIC DNA]</scope>
</reference>
<reference key="2">
    <citation type="journal article" date="2001" name="Nature">
        <title>Massive gene decay in the leprosy bacillus.</title>
        <authorList>
            <person name="Cole S.T."/>
            <person name="Eiglmeier K."/>
            <person name="Parkhill J."/>
            <person name="James K.D."/>
            <person name="Thomson N.R."/>
            <person name="Wheeler P.R."/>
            <person name="Honore N."/>
            <person name="Garnier T."/>
            <person name="Churcher C.M."/>
            <person name="Harris D.E."/>
            <person name="Mungall K.L."/>
            <person name="Basham D."/>
            <person name="Brown D."/>
            <person name="Chillingworth T."/>
            <person name="Connor R."/>
            <person name="Davies R.M."/>
            <person name="Devlin K."/>
            <person name="Duthoy S."/>
            <person name="Feltwell T."/>
            <person name="Fraser A."/>
            <person name="Hamlin N."/>
            <person name="Holroyd S."/>
            <person name="Hornsby T."/>
            <person name="Jagels K."/>
            <person name="Lacroix C."/>
            <person name="Maclean J."/>
            <person name="Moule S."/>
            <person name="Murphy L.D."/>
            <person name="Oliver K."/>
            <person name="Quail M.A."/>
            <person name="Rajandream M.A."/>
            <person name="Rutherford K.M."/>
            <person name="Rutter S."/>
            <person name="Seeger K."/>
            <person name="Simon S."/>
            <person name="Simmonds M."/>
            <person name="Skelton J."/>
            <person name="Squares R."/>
            <person name="Squares S."/>
            <person name="Stevens K."/>
            <person name="Taylor K."/>
            <person name="Whitehead S."/>
            <person name="Woodward J.R."/>
            <person name="Barrell B.G."/>
        </authorList>
    </citation>
    <scope>NUCLEOTIDE SEQUENCE [LARGE SCALE GENOMIC DNA]</scope>
    <source>
        <strain>TN</strain>
    </source>
</reference>
<proteinExistence type="inferred from homology"/>